<accession>O43053</accession>
<accession>Q9UUC4</accession>
<gene>
    <name type="primary">alg6</name>
    <name type="ORF">SPBC342.01c</name>
    <name type="ORF">SPBC3F6.06c</name>
</gene>
<evidence type="ECO:0000250" key="1">
    <source>
        <dbReference type="UniProtKB" id="Q12001"/>
    </source>
</evidence>
<evidence type="ECO:0000255" key="2"/>
<evidence type="ECO:0000305" key="3"/>
<sequence>MLSEFENGAPVQQFVSRFRSYSSKFLFFPCLIMSLVFMQWLISIGPYSGYNTPPMYGDFEAQRHWMELTLHTPVSQWYFRDLQWWGLDYPPLTAYVSWFFGIIGHYFFNPEWFADVTSRGFESLELKLFMRSTVIASHLLILVPPLMFYSKWWSRRIPNFVDRNASLIMVLFQPALLLIDHGHFQYNCVMLGLVMYAIANLLKNQYVAATFFFCLALTFKQMALYFAPPIFFYLLGTCVKPKIRFSRFILLSVTVVFTFSLILFPWIYMDYKTLLPQILHRVFPFARGLWEDKVANFWCTLNTVFKIREVFTLHQLQVISLIFTLISILPSCVILFLYPRKRLLALGFASASWGFFLFSFQVHEKSVLLPLLPTSILLCHGNITTKPWIALANNLAVFSLWPLLKKDGLGLQYFTLVLMWNWIGDMVVFSKNVLFRFIQLSFYVGMIVILGIDLFIPPPSRYPDLWVILNVTLSFAGFFTIYLWTLGRLLHISSKLSTDLRNKKEA</sequence>
<reference key="1">
    <citation type="journal article" date="2002" name="Nature">
        <title>The genome sequence of Schizosaccharomyces pombe.</title>
        <authorList>
            <person name="Wood V."/>
            <person name="Gwilliam R."/>
            <person name="Rajandream M.A."/>
            <person name="Lyne M.H."/>
            <person name="Lyne R."/>
            <person name="Stewart A."/>
            <person name="Sgouros J.G."/>
            <person name="Peat N."/>
            <person name="Hayles J."/>
            <person name="Baker S.G."/>
            <person name="Basham D."/>
            <person name="Bowman S."/>
            <person name="Brooks K."/>
            <person name="Brown D."/>
            <person name="Brown S."/>
            <person name="Chillingworth T."/>
            <person name="Churcher C.M."/>
            <person name="Collins M."/>
            <person name="Connor R."/>
            <person name="Cronin A."/>
            <person name="Davis P."/>
            <person name="Feltwell T."/>
            <person name="Fraser A."/>
            <person name="Gentles S."/>
            <person name="Goble A."/>
            <person name="Hamlin N."/>
            <person name="Harris D.E."/>
            <person name="Hidalgo J."/>
            <person name="Hodgson G."/>
            <person name="Holroyd S."/>
            <person name="Hornsby T."/>
            <person name="Howarth S."/>
            <person name="Huckle E.J."/>
            <person name="Hunt S."/>
            <person name="Jagels K."/>
            <person name="James K.D."/>
            <person name="Jones L."/>
            <person name="Jones M."/>
            <person name="Leather S."/>
            <person name="McDonald S."/>
            <person name="McLean J."/>
            <person name="Mooney P."/>
            <person name="Moule S."/>
            <person name="Mungall K.L."/>
            <person name="Murphy L.D."/>
            <person name="Niblett D."/>
            <person name="Odell C."/>
            <person name="Oliver K."/>
            <person name="O'Neil S."/>
            <person name="Pearson D."/>
            <person name="Quail M.A."/>
            <person name="Rabbinowitsch E."/>
            <person name="Rutherford K.M."/>
            <person name="Rutter S."/>
            <person name="Saunders D."/>
            <person name="Seeger K."/>
            <person name="Sharp S."/>
            <person name="Skelton J."/>
            <person name="Simmonds M.N."/>
            <person name="Squares R."/>
            <person name="Squares S."/>
            <person name="Stevens K."/>
            <person name="Taylor K."/>
            <person name="Taylor R.G."/>
            <person name="Tivey A."/>
            <person name="Walsh S.V."/>
            <person name="Warren T."/>
            <person name="Whitehead S."/>
            <person name="Woodward J.R."/>
            <person name="Volckaert G."/>
            <person name="Aert R."/>
            <person name="Robben J."/>
            <person name="Grymonprez B."/>
            <person name="Weltjens I."/>
            <person name="Vanstreels E."/>
            <person name="Rieger M."/>
            <person name="Schaefer M."/>
            <person name="Mueller-Auer S."/>
            <person name="Gabel C."/>
            <person name="Fuchs M."/>
            <person name="Duesterhoeft A."/>
            <person name="Fritzc C."/>
            <person name="Holzer E."/>
            <person name="Moestl D."/>
            <person name="Hilbert H."/>
            <person name="Borzym K."/>
            <person name="Langer I."/>
            <person name="Beck A."/>
            <person name="Lehrach H."/>
            <person name="Reinhardt R."/>
            <person name="Pohl T.M."/>
            <person name="Eger P."/>
            <person name="Zimmermann W."/>
            <person name="Wedler H."/>
            <person name="Wambutt R."/>
            <person name="Purnelle B."/>
            <person name="Goffeau A."/>
            <person name="Cadieu E."/>
            <person name="Dreano S."/>
            <person name="Gloux S."/>
            <person name="Lelaure V."/>
            <person name="Mottier S."/>
            <person name="Galibert F."/>
            <person name="Aves S.J."/>
            <person name="Xiang Z."/>
            <person name="Hunt C."/>
            <person name="Moore K."/>
            <person name="Hurst S.M."/>
            <person name="Lucas M."/>
            <person name="Rochet M."/>
            <person name="Gaillardin C."/>
            <person name="Tallada V.A."/>
            <person name="Garzon A."/>
            <person name="Thode G."/>
            <person name="Daga R.R."/>
            <person name="Cruzado L."/>
            <person name="Jimenez J."/>
            <person name="Sanchez M."/>
            <person name="del Rey F."/>
            <person name="Benito J."/>
            <person name="Dominguez A."/>
            <person name="Revuelta J.L."/>
            <person name="Moreno S."/>
            <person name="Armstrong J."/>
            <person name="Forsburg S.L."/>
            <person name="Cerutti L."/>
            <person name="Lowe T."/>
            <person name="McCombie W.R."/>
            <person name="Paulsen I."/>
            <person name="Potashkin J."/>
            <person name="Shpakovski G.V."/>
            <person name="Ussery D."/>
            <person name="Barrell B.G."/>
            <person name="Nurse P."/>
        </authorList>
    </citation>
    <scope>NUCLEOTIDE SEQUENCE [LARGE SCALE GENOMIC DNA]</scope>
    <source>
        <strain>972 / ATCC 24843</strain>
    </source>
</reference>
<feature type="chain" id="PRO_0000174160" description="Probable dolichyl pyrophosphate Man9GlcNAc2 alpha-1,3-glucosyltransferase">
    <location>
        <begin position="1"/>
        <end position="506"/>
    </location>
</feature>
<feature type="topological domain" description="Cytoplasmic" evidence="3">
    <location>
        <begin position="1"/>
        <end position="24"/>
    </location>
</feature>
<feature type="transmembrane region" description="Helical" evidence="2">
    <location>
        <begin position="25"/>
        <end position="45"/>
    </location>
</feature>
<feature type="topological domain" description="Lumenal" evidence="3">
    <location>
        <begin position="46"/>
        <end position="132"/>
    </location>
</feature>
<feature type="transmembrane region" description="Helical" evidence="2">
    <location>
        <begin position="133"/>
        <end position="153"/>
    </location>
</feature>
<feature type="topological domain" description="Cytoplasmic" evidence="3">
    <location>
        <begin position="154"/>
        <end position="163"/>
    </location>
</feature>
<feature type="transmembrane region" description="Helical" evidence="2">
    <location>
        <begin position="164"/>
        <end position="184"/>
    </location>
</feature>
<feature type="topological domain" description="Lumenal" evidence="3">
    <location>
        <begin position="185"/>
        <end position="210"/>
    </location>
</feature>
<feature type="transmembrane region" description="Helical" evidence="2">
    <location>
        <begin position="211"/>
        <end position="231"/>
    </location>
</feature>
<feature type="topological domain" description="Cytoplasmic" evidence="3">
    <location>
        <begin position="232"/>
        <end position="247"/>
    </location>
</feature>
<feature type="transmembrane region" description="Helical" evidence="2">
    <location>
        <begin position="248"/>
        <end position="268"/>
    </location>
</feature>
<feature type="topological domain" description="Lumenal" evidence="3">
    <location>
        <begin position="269"/>
        <end position="317"/>
    </location>
</feature>
<feature type="transmembrane region" description="Helical" evidence="2">
    <location>
        <begin position="318"/>
        <end position="338"/>
    </location>
</feature>
<feature type="topological domain" description="Cytoplasmic" evidence="3">
    <location>
        <begin position="339"/>
        <end position="342"/>
    </location>
</feature>
<feature type="transmembrane region" description="Helical" evidence="2">
    <location>
        <begin position="343"/>
        <end position="363"/>
    </location>
</feature>
<feature type="topological domain" description="Lumenal" evidence="3">
    <location>
        <begin position="364"/>
        <end position="382"/>
    </location>
</feature>
<feature type="transmembrane region" description="Helical" evidence="2">
    <location>
        <begin position="383"/>
        <end position="403"/>
    </location>
</feature>
<feature type="topological domain" description="Cytoplasmic" evidence="3">
    <location>
        <begin position="404"/>
        <end position="408"/>
    </location>
</feature>
<feature type="transmembrane region" description="Helical" evidence="2">
    <location>
        <begin position="409"/>
        <end position="429"/>
    </location>
</feature>
<feature type="topological domain" description="Lumenal" evidence="3">
    <location>
        <begin position="430"/>
        <end position="436"/>
    </location>
</feature>
<feature type="transmembrane region" description="Helical" evidence="2">
    <location>
        <begin position="437"/>
        <end position="457"/>
    </location>
</feature>
<feature type="topological domain" description="Cytoplasmic" evidence="3">
    <location>
        <begin position="458"/>
        <end position="464"/>
    </location>
</feature>
<feature type="transmembrane region" description="Helical" evidence="2">
    <location>
        <begin position="465"/>
        <end position="485"/>
    </location>
</feature>
<feature type="topological domain" description="Lumenal" evidence="3">
    <location>
        <begin position="486"/>
        <end position="506"/>
    </location>
</feature>
<keyword id="KW-0256">Endoplasmic reticulum</keyword>
<keyword id="KW-0328">Glycosyltransferase</keyword>
<keyword id="KW-0472">Membrane</keyword>
<keyword id="KW-1185">Reference proteome</keyword>
<keyword id="KW-0808">Transferase</keyword>
<keyword id="KW-0812">Transmembrane</keyword>
<keyword id="KW-1133">Transmembrane helix</keyword>
<organism>
    <name type="scientific">Schizosaccharomyces pombe (strain 972 / ATCC 24843)</name>
    <name type="common">Fission yeast</name>
    <dbReference type="NCBI Taxonomy" id="284812"/>
    <lineage>
        <taxon>Eukaryota</taxon>
        <taxon>Fungi</taxon>
        <taxon>Dikarya</taxon>
        <taxon>Ascomycota</taxon>
        <taxon>Taphrinomycotina</taxon>
        <taxon>Schizosaccharomycetes</taxon>
        <taxon>Schizosaccharomycetales</taxon>
        <taxon>Schizosaccharomycetaceae</taxon>
        <taxon>Schizosaccharomyces</taxon>
    </lineage>
</organism>
<proteinExistence type="inferred from homology"/>
<dbReference type="EC" id="2.4.1.267" evidence="1"/>
<dbReference type="EMBL" id="CU329671">
    <property type="protein sequence ID" value="CAA17695.1"/>
    <property type="molecule type" value="Genomic_DNA"/>
</dbReference>
<dbReference type="PIR" id="T40396">
    <property type="entry name" value="T40396"/>
</dbReference>
<dbReference type="RefSeq" id="NP_596744.1">
    <property type="nucleotide sequence ID" value="NM_001023764.2"/>
</dbReference>
<dbReference type="SMR" id="O43053"/>
<dbReference type="BioGRID" id="277509">
    <property type="interactions" value="53"/>
</dbReference>
<dbReference type="FunCoup" id="O43053">
    <property type="interactions" value="793"/>
</dbReference>
<dbReference type="STRING" id="284812.O43053"/>
<dbReference type="CAZy" id="GT57">
    <property type="family name" value="Glycosyltransferase Family 57"/>
</dbReference>
<dbReference type="PaxDb" id="4896-SPBC342.01c.1"/>
<dbReference type="EnsemblFungi" id="SPBC342.01c.1">
    <property type="protein sequence ID" value="SPBC342.01c.1:pep"/>
    <property type="gene ID" value="SPBC342.01c"/>
</dbReference>
<dbReference type="GeneID" id="2540993"/>
<dbReference type="KEGG" id="spo:2540993"/>
<dbReference type="PomBase" id="SPBC342.01c">
    <property type="gene designation" value="alg6"/>
</dbReference>
<dbReference type="VEuPathDB" id="FungiDB:SPBC342.01c"/>
<dbReference type="eggNOG" id="KOG2575">
    <property type="taxonomic scope" value="Eukaryota"/>
</dbReference>
<dbReference type="HOGENOM" id="CLU_008110_2_1_1"/>
<dbReference type="InParanoid" id="O43053"/>
<dbReference type="OMA" id="FQVPPMH"/>
<dbReference type="PhylomeDB" id="O43053"/>
<dbReference type="Reactome" id="R-SPO-446193">
    <property type="pathway name" value="Biosynthesis of the N-glycan precursor (dolichol lipid-linked oligosaccharide, LLO) and transfer to a nascent protein"/>
</dbReference>
<dbReference type="UniPathway" id="UPA00378"/>
<dbReference type="PRO" id="PR:O43053"/>
<dbReference type="Proteomes" id="UP000002485">
    <property type="component" value="Chromosome II"/>
</dbReference>
<dbReference type="GO" id="GO:0005789">
    <property type="term" value="C:endoplasmic reticulum membrane"/>
    <property type="evidence" value="ECO:0000318"/>
    <property type="project" value="GO_Central"/>
</dbReference>
<dbReference type="GO" id="GO:0000329">
    <property type="term" value="C:fungal-type vacuole membrane"/>
    <property type="evidence" value="ECO:0007005"/>
    <property type="project" value="PomBase"/>
</dbReference>
<dbReference type="GO" id="GO:0005794">
    <property type="term" value="C:Golgi apparatus"/>
    <property type="evidence" value="ECO:0007005"/>
    <property type="project" value="PomBase"/>
</dbReference>
<dbReference type="GO" id="GO:0098553">
    <property type="term" value="C:lumenal side of endoplasmic reticulum membrane"/>
    <property type="evidence" value="ECO:0000304"/>
    <property type="project" value="PomBase"/>
</dbReference>
<dbReference type="GO" id="GO:0042281">
    <property type="term" value="F:dolichyl pyrophosphate Man9GlcNAc2 alpha-1,3-glucosyltransferase activity"/>
    <property type="evidence" value="ECO:0000315"/>
    <property type="project" value="PomBase"/>
</dbReference>
<dbReference type="GO" id="GO:0006488">
    <property type="term" value="P:dolichol-linked oligosaccharide biosynthetic process"/>
    <property type="evidence" value="ECO:0000315"/>
    <property type="project" value="PomBase"/>
</dbReference>
<dbReference type="GO" id="GO:0018279">
    <property type="term" value="P:protein N-linked glycosylation via asparagine"/>
    <property type="evidence" value="ECO:0000315"/>
    <property type="project" value="PomBase"/>
</dbReference>
<dbReference type="InterPro" id="IPR004856">
    <property type="entry name" value="Glyco_trans_ALG6/ALG8"/>
</dbReference>
<dbReference type="PANTHER" id="PTHR12413">
    <property type="entry name" value="DOLICHYL GLYCOSYLTRANSFERASE"/>
    <property type="match status" value="1"/>
</dbReference>
<dbReference type="PANTHER" id="PTHR12413:SF1">
    <property type="entry name" value="DOLICHYL PYROPHOSPHATE MAN9GLCNAC2 ALPHA-1,3-GLUCOSYLTRANSFERASE"/>
    <property type="match status" value="1"/>
</dbReference>
<dbReference type="Pfam" id="PF03155">
    <property type="entry name" value="Alg6_Alg8"/>
    <property type="match status" value="1"/>
</dbReference>
<name>ALG6_SCHPO</name>
<comment type="function">
    <text evidence="1">Probable dolichyl pyrophosphate Man9GlcNAc2 alpha-1,3-glucosyltransferase that operates in the biosynthetic pathway of dolichol-linked oligosaccharides, the glycan precursors employed in protein asparagine (N)-glycosylation. The assembly of dolichol-linked oligosaccharides begins on the cytosolic side of the endoplasmic reticulum membrane and finishes in its lumen. The sequential addition of sugars to dolichol pyrophosphate produces dolichol-linked oligosaccharides containing fourteen sugars, including two GlcNAcs, nine mannoses and three glucoses. Once assembled, the oligosaccharide is transferred from the lipid to nascent proteins by oligosaccharyltransferases. In the lumen of the endoplasmic reticulum, adds the first glucose residue from dolichyl phosphate glucose (Dol-P-Glc) onto the lipid-linked oligosaccharide intermediate Man(9)GlcNAc(2)-PP-Dol to produce Glc(1)Man(9)GlcNAc(2)-PP-Dol.</text>
</comment>
<comment type="catalytic activity">
    <reaction evidence="1">
        <text>an alpha-D-Man-(1-&gt;2)-alpha-D-Man-(1-&gt;2)-alpha-D-Man-(1-&gt;3)-[alpha-D-Man-(1-&gt;2)-alpha-D-Man-(1-&gt;3)-[alpha-D-Man-(1-&gt;2)-alpha-D-Man-(1-&gt;6)]-alpha-D-Man-(1-&gt;6)]-beta-D-Man-(1-&gt;4)-beta-D-GlcNAc-(1-&gt;4)-alpha-D-GlcNAc-diphospho-di-trans,poly-cis-dolichol + a di-trans,poly-cis-dolichyl beta-D-glucosyl phosphate = an alpha-D-Glc-(1-&gt;3)-alpha-D-Man-(1-&gt;2)-alpha-D-Man-(1-&gt;2)-alpha-D-Man-(1-&gt;3)-[alpha-D-Man-(1-&gt;2)-alpha-D-Man-(1-&gt;3)-[alpha-D-Man-(1-&gt;2)-alpha-D-Man-(1-&gt;6)]-alpha-D-Man-(1-&gt;6)]-beta-D-Man-(1-&gt;4)-beta-D-GlcNAc-(1-&gt;4)-alpha-D-GlcNAc-diphospho-di-trans,poly-cis-dolichol + a di-trans,poly-cis-dolichyl phosphate + H(+)</text>
        <dbReference type="Rhea" id="RHEA:30635"/>
        <dbReference type="Rhea" id="RHEA-COMP:19498"/>
        <dbReference type="Rhea" id="RHEA-COMP:19502"/>
        <dbReference type="Rhea" id="RHEA-COMP:19520"/>
        <dbReference type="Rhea" id="RHEA-COMP:19521"/>
        <dbReference type="ChEBI" id="CHEBI:15378"/>
        <dbReference type="ChEBI" id="CHEBI:57525"/>
        <dbReference type="ChEBI" id="CHEBI:57683"/>
        <dbReference type="ChEBI" id="CHEBI:132520"/>
        <dbReference type="ChEBI" id="CHEBI:132521"/>
        <dbReference type="EC" id="2.4.1.267"/>
    </reaction>
    <physiologicalReaction direction="left-to-right" evidence="1">
        <dbReference type="Rhea" id="RHEA:30636"/>
    </physiologicalReaction>
</comment>
<comment type="pathway">
    <text evidence="1">Protein modification; protein glycosylation.</text>
</comment>
<comment type="subcellular location">
    <subcellularLocation>
        <location evidence="1">Endoplasmic reticulum membrane</location>
        <topology evidence="2">Multi-pass membrane protein</topology>
    </subcellularLocation>
</comment>
<comment type="similarity">
    <text evidence="3">Belongs to the ALG6/ALG8 glucosyltransferase family.</text>
</comment>
<protein>
    <recommendedName>
        <fullName evidence="1">Probable dolichyl pyrophosphate Man9GlcNAc2 alpha-1,3-glucosyltransferase</fullName>
        <ecNumber evidence="1">2.4.1.267</ecNumber>
    </recommendedName>
    <alternativeName>
        <fullName>Asparagine-linked glycosylation protein 6</fullName>
    </alternativeName>
    <alternativeName>
        <fullName>Dol-P-Glc:Man(9)GlcNAc(2)-PP-Dol alpha-1,3-glucosyltransferase</fullName>
    </alternativeName>
    <alternativeName>
        <fullName>Dolichyl-P-Glc:Man9GlcNAc2-PP-dolichyl glucosyltransferase</fullName>
    </alternativeName>
</protein>